<reference key="1">
    <citation type="journal article" date="2007" name="PLoS Genet.">
        <title>Patterns and implications of gene gain and loss in the evolution of Prochlorococcus.</title>
        <authorList>
            <person name="Kettler G.C."/>
            <person name="Martiny A.C."/>
            <person name="Huang K."/>
            <person name="Zucker J."/>
            <person name="Coleman M.L."/>
            <person name="Rodrigue S."/>
            <person name="Chen F."/>
            <person name="Lapidus A."/>
            <person name="Ferriera S."/>
            <person name="Johnson J."/>
            <person name="Steglich C."/>
            <person name="Church G.M."/>
            <person name="Richardson P."/>
            <person name="Chisholm S.W."/>
        </authorList>
    </citation>
    <scope>NUCLEOTIDE SEQUENCE [LARGE SCALE GENOMIC DNA]</scope>
    <source>
        <strain>MIT 9303</strain>
    </source>
</reference>
<feature type="chain" id="PRO_1000063585" description="3-isopropylmalate dehydratase large subunit">
    <location>
        <begin position="1"/>
        <end position="478"/>
    </location>
</feature>
<feature type="binding site" evidence="1">
    <location>
        <position position="347"/>
    </location>
    <ligand>
        <name>[4Fe-4S] cluster</name>
        <dbReference type="ChEBI" id="CHEBI:49883"/>
    </ligand>
</feature>
<feature type="binding site" evidence="1">
    <location>
        <position position="407"/>
    </location>
    <ligand>
        <name>[4Fe-4S] cluster</name>
        <dbReference type="ChEBI" id="CHEBI:49883"/>
    </ligand>
</feature>
<feature type="binding site" evidence="1">
    <location>
        <position position="410"/>
    </location>
    <ligand>
        <name>[4Fe-4S] cluster</name>
        <dbReference type="ChEBI" id="CHEBI:49883"/>
    </ligand>
</feature>
<proteinExistence type="inferred from homology"/>
<dbReference type="EC" id="4.2.1.33" evidence="1"/>
<dbReference type="EMBL" id="CP000554">
    <property type="protein sequence ID" value="ABM79200.1"/>
    <property type="molecule type" value="Genomic_DNA"/>
</dbReference>
<dbReference type="RefSeq" id="WP_011827051.1">
    <property type="nucleotide sequence ID" value="NC_008820.1"/>
</dbReference>
<dbReference type="SMR" id="A2CCJ0"/>
<dbReference type="STRING" id="59922.P9303_24691"/>
<dbReference type="KEGG" id="pmf:P9303_24691"/>
<dbReference type="HOGENOM" id="CLU_006714_3_4_3"/>
<dbReference type="BioCyc" id="PMAR59922:G1G80-2160-MONOMER"/>
<dbReference type="UniPathway" id="UPA00048">
    <property type="reaction ID" value="UER00071"/>
</dbReference>
<dbReference type="Proteomes" id="UP000002274">
    <property type="component" value="Chromosome"/>
</dbReference>
<dbReference type="GO" id="GO:0003861">
    <property type="term" value="F:3-isopropylmalate dehydratase activity"/>
    <property type="evidence" value="ECO:0007669"/>
    <property type="project" value="UniProtKB-UniRule"/>
</dbReference>
<dbReference type="GO" id="GO:0051539">
    <property type="term" value="F:4 iron, 4 sulfur cluster binding"/>
    <property type="evidence" value="ECO:0007669"/>
    <property type="project" value="UniProtKB-KW"/>
</dbReference>
<dbReference type="GO" id="GO:0046872">
    <property type="term" value="F:metal ion binding"/>
    <property type="evidence" value="ECO:0007669"/>
    <property type="project" value="UniProtKB-KW"/>
</dbReference>
<dbReference type="GO" id="GO:0009098">
    <property type="term" value="P:L-leucine biosynthetic process"/>
    <property type="evidence" value="ECO:0007669"/>
    <property type="project" value="UniProtKB-UniRule"/>
</dbReference>
<dbReference type="CDD" id="cd01583">
    <property type="entry name" value="IPMI"/>
    <property type="match status" value="1"/>
</dbReference>
<dbReference type="Gene3D" id="3.30.499.10">
    <property type="entry name" value="Aconitase, domain 3"/>
    <property type="match status" value="2"/>
</dbReference>
<dbReference type="HAMAP" id="MF_01026">
    <property type="entry name" value="LeuC_type1"/>
    <property type="match status" value="1"/>
</dbReference>
<dbReference type="InterPro" id="IPR004430">
    <property type="entry name" value="3-IsopropMal_deHydase_lsu"/>
</dbReference>
<dbReference type="InterPro" id="IPR015931">
    <property type="entry name" value="Acnase/IPM_dHydase_lsu_aba_1/3"/>
</dbReference>
<dbReference type="InterPro" id="IPR001030">
    <property type="entry name" value="Acoase/IPM_deHydtase_lsu_aba"/>
</dbReference>
<dbReference type="InterPro" id="IPR018136">
    <property type="entry name" value="Aconitase_4Fe-4S_BS"/>
</dbReference>
<dbReference type="InterPro" id="IPR036008">
    <property type="entry name" value="Aconitase_4Fe-4S_dom"/>
</dbReference>
<dbReference type="InterPro" id="IPR050067">
    <property type="entry name" value="IPM_dehydratase_rel_enz"/>
</dbReference>
<dbReference type="InterPro" id="IPR033941">
    <property type="entry name" value="IPMI_cat"/>
</dbReference>
<dbReference type="NCBIfam" id="TIGR00170">
    <property type="entry name" value="leuC"/>
    <property type="match status" value="1"/>
</dbReference>
<dbReference type="NCBIfam" id="NF004016">
    <property type="entry name" value="PRK05478.1"/>
    <property type="match status" value="1"/>
</dbReference>
<dbReference type="NCBIfam" id="NF009116">
    <property type="entry name" value="PRK12466.1"/>
    <property type="match status" value="1"/>
</dbReference>
<dbReference type="PANTHER" id="PTHR43822:SF9">
    <property type="entry name" value="3-ISOPROPYLMALATE DEHYDRATASE"/>
    <property type="match status" value="1"/>
</dbReference>
<dbReference type="PANTHER" id="PTHR43822">
    <property type="entry name" value="HOMOACONITASE, MITOCHONDRIAL-RELATED"/>
    <property type="match status" value="1"/>
</dbReference>
<dbReference type="Pfam" id="PF00330">
    <property type="entry name" value="Aconitase"/>
    <property type="match status" value="1"/>
</dbReference>
<dbReference type="PRINTS" id="PR00415">
    <property type="entry name" value="ACONITASE"/>
</dbReference>
<dbReference type="SUPFAM" id="SSF53732">
    <property type="entry name" value="Aconitase iron-sulfur domain"/>
    <property type="match status" value="1"/>
</dbReference>
<dbReference type="PROSITE" id="PS00450">
    <property type="entry name" value="ACONITASE_1"/>
    <property type="match status" value="1"/>
</dbReference>
<dbReference type="PROSITE" id="PS01244">
    <property type="entry name" value="ACONITASE_2"/>
    <property type="match status" value="1"/>
</dbReference>
<keyword id="KW-0004">4Fe-4S</keyword>
<keyword id="KW-0028">Amino-acid biosynthesis</keyword>
<keyword id="KW-0100">Branched-chain amino acid biosynthesis</keyword>
<keyword id="KW-0408">Iron</keyword>
<keyword id="KW-0411">Iron-sulfur</keyword>
<keyword id="KW-0432">Leucine biosynthesis</keyword>
<keyword id="KW-0456">Lyase</keyword>
<keyword id="KW-0479">Metal-binding</keyword>
<comment type="function">
    <text evidence="1">Catalyzes the isomerization between 2-isopropylmalate and 3-isopropylmalate, via the formation of 2-isopropylmaleate.</text>
</comment>
<comment type="catalytic activity">
    <reaction evidence="1">
        <text>(2R,3S)-3-isopropylmalate = (2S)-2-isopropylmalate</text>
        <dbReference type="Rhea" id="RHEA:32287"/>
        <dbReference type="ChEBI" id="CHEBI:1178"/>
        <dbReference type="ChEBI" id="CHEBI:35121"/>
        <dbReference type="EC" id="4.2.1.33"/>
    </reaction>
</comment>
<comment type="cofactor">
    <cofactor evidence="1">
        <name>[4Fe-4S] cluster</name>
        <dbReference type="ChEBI" id="CHEBI:49883"/>
    </cofactor>
    <text evidence="1">Binds 1 [4Fe-4S] cluster per subunit.</text>
</comment>
<comment type="pathway">
    <text evidence="1">Amino-acid biosynthesis; L-leucine biosynthesis; L-leucine from 3-methyl-2-oxobutanoate: step 2/4.</text>
</comment>
<comment type="subunit">
    <text evidence="1">Heterodimer of LeuC and LeuD.</text>
</comment>
<comment type="similarity">
    <text evidence="1">Belongs to the aconitase/IPM isomerase family. LeuC type 1 subfamily.</text>
</comment>
<sequence length="478" mass="50952">MSSGTLYDKVWDLHRVADLPGGSTQLFVGLHLIHEVTSPQAFAALQDKGLPVRCPERTVATVDHIVPTISQKRPFADPLAEEMLSTLERNCANYGIVLCGLGSGRQGIVHVIAPELGLTQPGMTVACGDSHTSTHGAFGAIAFGIGTSQVRDVLASQSLAMNKLKVRRIWVDGQLGSGVHAKDLILHVIRSLGVKAGVGYAYEFAGPAIDVLSMEERMTLCNMAIEGGARCGYVNPDGVTFDYLQGRFYAPTGEAWHRAVAWWSSLASDPNAVFDDEVMFDAASIAPMVTWGITPGQGIAVDESVPTIDSLEPNERPIAEEACRYMDLEPGMAIEGVPVDVCFIGSCTNGRLSDLKAAAAIAKGRHVAQGIKAFVVPGSEQVARAAEAEGLDGVFRKAGFEWREPGCSMCLAMNPDRLEGRQISASSSNRNFKGRQGSSRGRTLLMSPAMVAAAAITGQVTDVRKLISNTVPSKSFHQ</sequence>
<evidence type="ECO:0000255" key="1">
    <source>
        <dbReference type="HAMAP-Rule" id="MF_01026"/>
    </source>
</evidence>
<organism>
    <name type="scientific">Prochlorococcus marinus (strain MIT 9303)</name>
    <dbReference type="NCBI Taxonomy" id="59922"/>
    <lineage>
        <taxon>Bacteria</taxon>
        <taxon>Bacillati</taxon>
        <taxon>Cyanobacteriota</taxon>
        <taxon>Cyanophyceae</taxon>
        <taxon>Synechococcales</taxon>
        <taxon>Prochlorococcaceae</taxon>
        <taxon>Prochlorococcus</taxon>
    </lineage>
</organism>
<protein>
    <recommendedName>
        <fullName evidence="1">3-isopropylmalate dehydratase large subunit</fullName>
        <ecNumber evidence="1">4.2.1.33</ecNumber>
    </recommendedName>
    <alternativeName>
        <fullName evidence="1">Alpha-IPM isomerase</fullName>
        <shortName evidence="1">IPMI</shortName>
    </alternativeName>
    <alternativeName>
        <fullName evidence="1">Isopropylmalate isomerase</fullName>
    </alternativeName>
</protein>
<accession>A2CCJ0</accession>
<gene>
    <name evidence="1" type="primary">leuC</name>
    <name type="ordered locus">P9303_24691</name>
</gene>
<name>LEUC_PROM3</name>